<name>RS19_CLOP1</name>
<protein>
    <recommendedName>
        <fullName evidence="1">Small ribosomal subunit protein uS19</fullName>
    </recommendedName>
    <alternativeName>
        <fullName evidence="2">30S ribosomal protein S19</fullName>
    </alternativeName>
</protein>
<accession>Q0TMQ0</accession>
<gene>
    <name evidence="1" type="primary">rpsS</name>
    <name type="ordered locus">CPF_2710</name>
</gene>
<sequence length="93" mass="10640">MSRSIKKGPFVHAGLLKKIEEMNQNGDKKVIKTWSRSSTIFPQMIGHTIAVHDGRKHIPVYVTEDMVGHKLGEFVLTRTFKGHIKNEKTSKRK</sequence>
<keyword id="KW-0687">Ribonucleoprotein</keyword>
<keyword id="KW-0689">Ribosomal protein</keyword>
<keyword id="KW-0694">RNA-binding</keyword>
<keyword id="KW-0699">rRNA-binding</keyword>
<comment type="function">
    <text evidence="1">Protein S19 forms a complex with S13 that binds strongly to the 16S ribosomal RNA.</text>
</comment>
<comment type="similarity">
    <text evidence="1">Belongs to the universal ribosomal protein uS19 family.</text>
</comment>
<evidence type="ECO:0000255" key="1">
    <source>
        <dbReference type="HAMAP-Rule" id="MF_00531"/>
    </source>
</evidence>
<evidence type="ECO:0000305" key="2"/>
<dbReference type="EMBL" id="CP000246">
    <property type="protein sequence ID" value="ABG84590.1"/>
    <property type="molecule type" value="Genomic_DNA"/>
</dbReference>
<dbReference type="RefSeq" id="WP_003454422.1">
    <property type="nucleotide sequence ID" value="NC_008261.1"/>
</dbReference>
<dbReference type="SMR" id="Q0TMQ0"/>
<dbReference type="STRING" id="195103.CPF_2710"/>
<dbReference type="PaxDb" id="195103-CPF_2710"/>
<dbReference type="GeneID" id="93001013"/>
<dbReference type="KEGG" id="cpf:CPF_2710"/>
<dbReference type="eggNOG" id="COG0185">
    <property type="taxonomic scope" value="Bacteria"/>
</dbReference>
<dbReference type="HOGENOM" id="CLU_144911_0_1_9"/>
<dbReference type="Proteomes" id="UP000001823">
    <property type="component" value="Chromosome"/>
</dbReference>
<dbReference type="GO" id="GO:0005737">
    <property type="term" value="C:cytoplasm"/>
    <property type="evidence" value="ECO:0007669"/>
    <property type="project" value="UniProtKB-ARBA"/>
</dbReference>
<dbReference type="GO" id="GO:0015935">
    <property type="term" value="C:small ribosomal subunit"/>
    <property type="evidence" value="ECO:0007669"/>
    <property type="project" value="InterPro"/>
</dbReference>
<dbReference type="GO" id="GO:0019843">
    <property type="term" value="F:rRNA binding"/>
    <property type="evidence" value="ECO:0007669"/>
    <property type="project" value="UniProtKB-UniRule"/>
</dbReference>
<dbReference type="GO" id="GO:0003735">
    <property type="term" value="F:structural constituent of ribosome"/>
    <property type="evidence" value="ECO:0007669"/>
    <property type="project" value="InterPro"/>
</dbReference>
<dbReference type="GO" id="GO:0000028">
    <property type="term" value="P:ribosomal small subunit assembly"/>
    <property type="evidence" value="ECO:0007669"/>
    <property type="project" value="TreeGrafter"/>
</dbReference>
<dbReference type="GO" id="GO:0006412">
    <property type="term" value="P:translation"/>
    <property type="evidence" value="ECO:0007669"/>
    <property type="project" value="UniProtKB-UniRule"/>
</dbReference>
<dbReference type="FunFam" id="3.30.860.10:FF:000001">
    <property type="entry name" value="30S ribosomal protein S19"/>
    <property type="match status" value="1"/>
</dbReference>
<dbReference type="Gene3D" id="3.30.860.10">
    <property type="entry name" value="30s Ribosomal Protein S19, Chain A"/>
    <property type="match status" value="1"/>
</dbReference>
<dbReference type="HAMAP" id="MF_00531">
    <property type="entry name" value="Ribosomal_uS19"/>
    <property type="match status" value="1"/>
</dbReference>
<dbReference type="InterPro" id="IPR002222">
    <property type="entry name" value="Ribosomal_uS19"/>
</dbReference>
<dbReference type="InterPro" id="IPR005732">
    <property type="entry name" value="Ribosomal_uS19_bac-type"/>
</dbReference>
<dbReference type="InterPro" id="IPR020934">
    <property type="entry name" value="Ribosomal_uS19_CS"/>
</dbReference>
<dbReference type="InterPro" id="IPR023575">
    <property type="entry name" value="Ribosomal_uS19_SF"/>
</dbReference>
<dbReference type="NCBIfam" id="TIGR01050">
    <property type="entry name" value="rpsS_bact"/>
    <property type="match status" value="1"/>
</dbReference>
<dbReference type="PANTHER" id="PTHR11880">
    <property type="entry name" value="RIBOSOMAL PROTEIN S19P FAMILY MEMBER"/>
    <property type="match status" value="1"/>
</dbReference>
<dbReference type="PANTHER" id="PTHR11880:SF8">
    <property type="entry name" value="SMALL RIBOSOMAL SUBUNIT PROTEIN US19M"/>
    <property type="match status" value="1"/>
</dbReference>
<dbReference type="Pfam" id="PF00203">
    <property type="entry name" value="Ribosomal_S19"/>
    <property type="match status" value="1"/>
</dbReference>
<dbReference type="PIRSF" id="PIRSF002144">
    <property type="entry name" value="Ribosomal_S19"/>
    <property type="match status" value="1"/>
</dbReference>
<dbReference type="PRINTS" id="PR00975">
    <property type="entry name" value="RIBOSOMALS19"/>
</dbReference>
<dbReference type="SUPFAM" id="SSF54570">
    <property type="entry name" value="Ribosomal protein S19"/>
    <property type="match status" value="1"/>
</dbReference>
<dbReference type="PROSITE" id="PS00323">
    <property type="entry name" value="RIBOSOMAL_S19"/>
    <property type="match status" value="1"/>
</dbReference>
<reference key="1">
    <citation type="journal article" date="2006" name="Genome Res.">
        <title>Skewed genomic variability in strains of the toxigenic bacterial pathogen, Clostridium perfringens.</title>
        <authorList>
            <person name="Myers G.S.A."/>
            <person name="Rasko D.A."/>
            <person name="Cheung J.K."/>
            <person name="Ravel J."/>
            <person name="Seshadri R."/>
            <person name="DeBoy R.T."/>
            <person name="Ren Q."/>
            <person name="Varga J."/>
            <person name="Awad M.M."/>
            <person name="Brinkac L.M."/>
            <person name="Daugherty S.C."/>
            <person name="Haft D.H."/>
            <person name="Dodson R.J."/>
            <person name="Madupu R."/>
            <person name="Nelson W.C."/>
            <person name="Rosovitz M.J."/>
            <person name="Sullivan S.A."/>
            <person name="Khouri H."/>
            <person name="Dimitrov G.I."/>
            <person name="Watkins K.L."/>
            <person name="Mulligan S."/>
            <person name="Benton J."/>
            <person name="Radune D."/>
            <person name="Fisher D.J."/>
            <person name="Atkins H.S."/>
            <person name="Hiscox T."/>
            <person name="Jost B.H."/>
            <person name="Billington S.J."/>
            <person name="Songer J.G."/>
            <person name="McClane B.A."/>
            <person name="Titball R.W."/>
            <person name="Rood J.I."/>
            <person name="Melville S.B."/>
            <person name="Paulsen I.T."/>
        </authorList>
    </citation>
    <scope>NUCLEOTIDE SEQUENCE [LARGE SCALE GENOMIC DNA]</scope>
    <source>
        <strain>ATCC 13124 / DSM 756 / JCM 1290 / NCIMB 6125 / NCTC 8237 / S 107 / Type A</strain>
    </source>
</reference>
<organism>
    <name type="scientific">Clostridium perfringens (strain ATCC 13124 / DSM 756 / JCM 1290 / NCIMB 6125 / NCTC 8237 / Type A)</name>
    <dbReference type="NCBI Taxonomy" id="195103"/>
    <lineage>
        <taxon>Bacteria</taxon>
        <taxon>Bacillati</taxon>
        <taxon>Bacillota</taxon>
        <taxon>Clostridia</taxon>
        <taxon>Eubacteriales</taxon>
        <taxon>Clostridiaceae</taxon>
        <taxon>Clostridium</taxon>
    </lineage>
</organism>
<proteinExistence type="inferred from homology"/>
<feature type="chain" id="PRO_0000265348" description="Small ribosomal subunit protein uS19">
    <location>
        <begin position="1"/>
        <end position="93"/>
    </location>
</feature>